<accession>A0A1B2CTA8</accession>
<protein>
    <recommendedName>
        <fullName evidence="9">FAD-dependent monooxygenase penE</fullName>
        <ecNumber evidence="7 8">1.-.-.-</ecNumber>
    </recommendedName>
    <alternativeName>
        <fullName evidence="9">Penigequinolones biosynthesis cluster protein E</fullName>
    </alternativeName>
</protein>
<feature type="chain" id="PRO_0000455358" description="FAD-dependent monooxygenase penE">
    <location>
        <begin position="1"/>
        <end position="475"/>
    </location>
</feature>
<feature type="transmembrane region" description="Helical" evidence="5">
    <location>
        <begin position="446"/>
        <end position="466"/>
    </location>
</feature>
<feature type="active site" evidence="1">
    <location>
        <position position="216"/>
    </location>
</feature>
<feature type="binding site" evidence="1">
    <location>
        <position position="35"/>
    </location>
    <ligand>
        <name>FAD</name>
        <dbReference type="ChEBI" id="CHEBI:57692"/>
    </ligand>
</feature>
<feature type="binding site" evidence="1">
    <location>
        <position position="49"/>
    </location>
    <ligand>
        <name>FAD</name>
        <dbReference type="ChEBI" id="CHEBI:57692"/>
    </ligand>
</feature>
<feature type="binding site" evidence="1">
    <location>
        <position position="108"/>
    </location>
    <ligand>
        <name>FAD</name>
        <dbReference type="ChEBI" id="CHEBI:57692"/>
    </ligand>
</feature>
<feature type="binding site" evidence="1">
    <location>
        <position position="308"/>
    </location>
    <ligand>
        <name>FAD</name>
        <dbReference type="ChEBI" id="CHEBI:57692"/>
    </ligand>
</feature>
<feature type="binding site" evidence="1">
    <location>
        <position position="321"/>
    </location>
    <ligand>
        <name>FAD</name>
        <dbReference type="ChEBI" id="CHEBI:57692"/>
    </ligand>
</feature>
<feature type="glycosylation site" description="N-linked (GlcNAc...) asparagine" evidence="6">
    <location>
        <position position="437"/>
    </location>
</feature>
<comment type="function">
    <text evidence="2 3 4 7 8 11">FAD-dependent monooxygenase; part of the gene cluster that mediates the biosynthesis of penigequinolones, potent insecticidal alkaloids that contain a highly modified 10-carbon prenyl group (PubMed:25859931). The first stage is catalyzed by the nonribosomal peptide synthetase penN that condenses anthranilic acid and O-methyl-L-tyrosine to produce 4'-methoxycyclopeptin (By similarity). 4'-methoxycyclopeptin is then converted to 4'-methoxydehydrocyclopeptin by the ketoglutarate-dependent dioxygenase penM through dehydrogenation to form a double bond between C-alpha and C-beta of the O-methyltyrosine side chain (By similarity). PenM also converts its first product methoxydehydrocyclopeptin to 4'-methoxycyclopenin (By similarity). The following conversion of 4'methoxycyclopenin into 4'-methoxyviridicatin is catalyzed by the cyclopenase penL (By similarity). 4'-methoxyviridicatin is the precursor of quinolone natural products, and is further converted to quinolinone B (Probable). The prenyltransferase penI then catalyzes the canonical Friedel-Crafts alkylation of quinolinone B with dimethylallyl cation to yield dimethylallyl quinolone, which is subjected to FAD-dependent dehydrogenation by the FAD-linked oxidoreductase penH to yield conjugated aryl diene (PubMed:25859931). The delta(3') double bond then serves as the site of the second alkylation with DMAPP catalyzed by the prenyltransferase penG to yield a carbenium ion intermediate, which can be attacked by H(2)O to yield a styrenyl quinolone containing a C3'-hydroxyprenyl chain, or undergo cyclization to yield yaequinolones J1 and J2 (PubMed:25859931). The conversion of the styrenyl quinolone into the tetrahydrofuran-containing yaequinolone C is performed by the FAD-dependent monooxygenase penE and involves epoxidation of the terminal C7'-C8' olefin, followed by epoxide ring opening initiated by the C3' hydroxyl group (PubMed:25859931). The predicted cysteine hydrolase penJ acts as an epoxide hydrolase that enhances the rate of the 5-exo-tet cyclization step, increasing the yield of yaequinolone C (PubMed:25859931, PubMed:28114276). PenF catalyzes the cationic rearrangement of the epoxide formed by penE (before ring opening to produce yaequinolone C) into yaequinolone D (PubMed:28114276). Finally, the short-chain dehydrogenase/reductase (SDR)-like reductase penD, catalyzes both the dehydration of yaequinolone D and the reduction of the resulting oxonium to yield penigequinolone (PubMed:28114276).</text>
</comment>
<comment type="catalytic activity">
    <reaction evidence="7">
        <text>[(1'E)-3'-hydroxy-3',7'-dimethylocta-1',6'-dien-1'-yl]-quinolinone B + NADPH + O2 + H(+) = [(1'E)-5'-(3',3'-dimethyloxiran-2'-yl)-3'-hydroxy-3'-methylpent-1'-en-1'-yl]-quinolinone B + NADP(+) + H2O</text>
        <dbReference type="Rhea" id="RHEA:74011"/>
        <dbReference type="ChEBI" id="CHEBI:15377"/>
        <dbReference type="ChEBI" id="CHEBI:15378"/>
        <dbReference type="ChEBI" id="CHEBI:15379"/>
        <dbReference type="ChEBI" id="CHEBI:57783"/>
        <dbReference type="ChEBI" id="CHEBI:58349"/>
        <dbReference type="ChEBI" id="CHEBI:193078"/>
        <dbReference type="ChEBI" id="CHEBI:193079"/>
    </reaction>
    <physiologicalReaction direction="left-to-right" evidence="7">
        <dbReference type="Rhea" id="RHEA:74012"/>
    </physiologicalReaction>
</comment>
<comment type="cofactor">
    <cofactor evidence="10">
        <name>FAD</name>
        <dbReference type="ChEBI" id="CHEBI:57692"/>
    </cofactor>
</comment>
<comment type="pathway">
    <text evidence="7 8">Secondary metabolite biosynthesis.</text>
</comment>
<comment type="pathway">
    <text evidence="7 8">Alkaloid biosynthesis.</text>
</comment>
<comment type="pathway">
    <text evidence="7 8">Mycotoxin biosynthesis.</text>
</comment>
<comment type="subcellular location">
    <subcellularLocation>
        <location evidence="5">Membrane</location>
        <topology evidence="5">Single-pass membrane protein</topology>
    </subcellularLocation>
</comment>
<comment type="disruption phenotype">
    <text evidence="7">Leads to the disappearance of penigequinolone, and the accumulation of the styrenyl quinolone precusor as well as the minor metabolites yaequinolone J1 and J2.</text>
</comment>
<comment type="similarity">
    <text evidence="10">Belongs to the paxM FAD-dependent monooxygenase family.</text>
</comment>
<gene>
    <name evidence="9" type="primary">penE</name>
</gene>
<organism>
    <name type="scientific">Penicillium thymicola</name>
    <dbReference type="NCBI Taxonomy" id="293382"/>
    <lineage>
        <taxon>Eukaryota</taxon>
        <taxon>Fungi</taxon>
        <taxon>Dikarya</taxon>
        <taxon>Ascomycota</taxon>
        <taxon>Pezizomycotina</taxon>
        <taxon>Eurotiomycetes</taxon>
        <taxon>Eurotiomycetidae</taxon>
        <taxon>Eurotiales</taxon>
        <taxon>Aspergillaceae</taxon>
        <taxon>Penicillium</taxon>
    </lineage>
</organism>
<proteinExistence type="evidence at protein level"/>
<sequence length="475" mass="53122">MEKPEFKVIIVGGSIAGLTLAHCLAQANIDHVVLEKRSAIAPQEGAFIGIWPNGARVFEQLGIFGDMEKQTVPFHRMHLRYPDGFSFSSSLPELVSERFGYPIITLDRQRVLEVLHERYPFKSNIIVNKKVVEIQTLDHGARVVTEDGAVYTGDLIVGADGVHSSIRSEMWRLADAISPGLITEHERKSLTVEYACVFGISSPIPGLESGELINSYSDGSCVITFHGEDGRVFWFMIEKLQRKYVYPDNPRFSVDDAAGFCARLSSVPIWRDICVAHLWRNRISVSMTALEEGLFQTWHFGRVVLLGDSVHKMTPNIGQGANTAVEDAATLASLINGLLKSGSASHTSDSDINNLLRVFQSLRYDRVKRTYQQSCSGARLQTRDDFLKILVGRYVFPYVGDYISHSMCKDISGGHVIDFLPLPKRSKAGWAKYSRSNRSRATQLQWGSIWLSPVILCLFCMLFLWPWSSSLPISS</sequence>
<name>PENE_PENTH</name>
<evidence type="ECO:0000250" key="1">
    <source>
        <dbReference type="UniProtKB" id="B8M9J8"/>
    </source>
</evidence>
<evidence type="ECO:0000250" key="2">
    <source>
        <dbReference type="UniProtKB" id="C8VJQ3"/>
    </source>
</evidence>
<evidence type="ECO:0000250" key="3">
    <source>
        <dbReference type="UniProtKB" id="Q5AR53"/>
    </source>
</evidence>
<evidence type="ECO:0000250" key="4">
    <source>
        <dbReference type="UniProtKB" id="Q5AR54"/>
    </source>
</evidence>
<evidence type="ECO:0000255" key="5"/>
<evidence type="ECO:0000255" key="6">
    <source>
        <dbReference type="PROSITE-ProRule" id="PRU00498"/>
    </source>
</evidence>
<evidence type="ECO:0000269" key="7">
    <source>
    </source>
</evidence>
<evidence type="ECO:0000269" key="8">
    <source>
    </source>
</evidence>
<evidence type="ECO:0000303" key="9">
    <source>
    </source>
</evidence>
<evidence type="ECO:0000305" key="10"/>
<evidence type="ECO:0000305" key="11">
    <source>
    </source>
</evidence>
<dbReference type="EC" id="1.-.-.-" evidence="7 8"/>
<dbReference type="EMBL" id="KX528209">
    <property type="protein sequence ID" value="ANY57883.1"/>
    <property type="molecule type" value="Genomic_DNA"/>
</dbReference>
<dbReference type="SMR" id="A0A1B2CTA8"/>
<dbReference type="GlyCosmos" id="A0A1B2CTA8">
    <property type="glycosylation" value="1 site, No reported glycans"/>
</dbReference>
<dbReference type="BioCyc" id="MetaCyc:MONOMER-124186"/>
<dbReference type="GO" id="GO:0016020">
    <property type="term" value="C:membrane"/>
    <property type="evidence" value="ECO:0007669"/>
    <property type="project" value="UniProtKB-SubCell"/>
</dbReference>
<dbReference type="GO" id="GO:0071949">
    <property type="term" value="F:FAD binding"/>
    <property type="evidence" value="ECO:0007669"/>
    <property type="project" value="InterPro"/>
</dbReference>
<dbReference type="GO" id="GO:0004497">
    <property type="term" value="F:monooxygenase activity"/>
    <property type="evidence" value="ECO:0007669"/>
    <property type="project" value="UniProtKB-KW"/>
</dbReference>
<dbReference type="Gene3D" id="3.50.50.60">
    <property type="entry name" value="FAD/NAD(P)-binding domain"/>
    <property type="match status" value="1"/>
</dbReference>
<dbReference type="InterPro" id="IPR002938">
    <property type="entry name" value="FAD-bd"/>
</dbReference>
<dbReference type="InterPro" id="IPR036188">
    <property type="entry name" value="FAD/NAD-bd_sf"/>
</dbReference>
<dbReference type="InterPro" id="IPR050562">
    <property type="entry name" value="FAD_mOase_fung"/>
</dbReference>
<dbReference type="PANTHER" id="PTHR47356:SF2">
    <property type="entry name" value="FAD-BINDING DOMAIN-CONTAINING PROTEIN-RELATED"/>
    <property type="match status" value="1"/>
</dbReference>
<dbReference type="PANTHER" id="PTHR47356">
    <property type="entry name" value="FAD-DEPENDENT MONOOXYGENASE ASQG-RELATED"/>
    <property type="match status" value="1"/>
</dbReference>
<dbReference type="Pfam" id="PF01494">
    <property type="entry name" value="FAD_binding_3"/>
    <property type="match status" value="2"/>
</dbReference>
<dbReference type="PRINTS" id="PR00420">
    <property type="entry name" value="RNGMNOXGNASE"/>
</dbReference>
<dbReference type="SUPFAM" id="SSF51905">
    <property type="entry name" value="FAD/NAD(P)-binding domain"/>
    <property type="match status" value="1"/>
</dbReference>
<keyword id="KW-0274">FAD</keyword>
<keyword id="KW-0285">Flavoprotein</keyword>
<keyword id="KW-0325">Glycoprotein</keyword>
<keyword id="KW-0472">Membrane</keyword>
<keyword id="KW-0503">Monooxygenase</keyword>
<keyword id="KW-0560">Oxidoreductase</keyword>
<keyword id="KW-0812">Transmembrane</keyword>
<keyword id="KW-1133">Transmembrane helix</keyword>
<reference key="1">
    <citation type="journal article" date="2015" name="J. Am. Chem. Soc.">
        <title>Tandem prenyltransferases catalyze isoprenoid elongation and complexity generation in biosynthesis of quinolone alkaloids.</title>
        <authorList>
            <person name="Zou Y."/>
            <person name="Zhan Z."/>
            <person name="Li D."/>
            <person name="Tang M."/>
            <person name="Cacho R.A."/>
            <person name="Watanabe K."/>
            <person name="Tang Y."/>
        </authorList>
    </citation>
    <scope>NUCLEOTIDE SEQUENCE [GENOMIC DNA]</scope>
    <scope>FUNCTION</scope>
    <scope>DISRUPTION PHENOTYPE</scope>
    <scope>CATALYTIC ACTIVITY</scope>
    <scope>PATHWAY</scope>
    <source>
        <strain>IBT 5891 / CBS 111225</strain>
    </source>
</reference>
<reference key="2">
    <citation type="journal article" date="2017" name="Nat. Chem. Biol.">
        <title>Enzyme-catalyzed cationic epoxide rearrangements in quinolone alkaloid biosynthesis.</title>
        <authorList>
            <person name="Zou Y."/>
            <person name="Garcia-Borras M."/>
            <person name="Tang M.C."/>
            <person name="Hirayama Y."/>
            <person name="Li D.H."/>
            <person name="Li L."/>
            <person name="Watanabe K."/>
            <person name="Houk K.N."/>
            <person name="Tang Y."/>
        </authorList>
    </citation>
    <scope>FUNCTION</scope>
    <scope>CATALYTIC ACTIVITY</scope>
    <scope>PATHWAY</scope>
</reference>